<dbReference type="EMBL" id="CP000560">
    <property type="protein sequence ID" value="ABS75578.1"/>
    <property type="molecule type" value="Genomic_DNA"/>
</dbReference>
<dbReference type="RefSeq" id="WP_012118566.1">
    <property type="nucleotide sequence ID" value="NC_009725.2"/>
</dbReference>
<dbReference type="SMR" id="A7Z9A2"/>
<dbReference type="GeneID" id="93082393"/>
<dbReference type="KEGG" id="bay:RBAM_032480"/>
<dbReference type="HOGENOM" id="CLU_165941_1_0_9"/>
<dbReference type="Proteomes" id="UP000001120">
    <property type="component" value="Chromosome"/>
</dbReference>
<dbReference type="GO" id="GO:0005829">
    <property type="term" value="C:cytosol"/>
    <property type="evidence" value="ECO:0007669"/>
    <property type="project" value="UniProtKB-SubCell"/>
</dbReference>
<dbReference type="GO" id="GO:0044781">
    <property type="term" value="P:bacterial-type flagellum organization"/>
    <property type="evidence" value="ECO:0007669"/>
    <property type="project" value="UniProtKB-KW"/>
</dbReference>
<comment type="function">
    <text evidence="1">May act as an export chaperone for the filament capping protein FliD.</text>
</comment>
<comment type="subunit">
    <text evidence="1">Homodimer.</text>
</comment>
<comment type="subcellular location">
    <subcellularLocation>
        <location evidence="1">Cytoplasm</location>
        <location evidence="1">Cytosol</location>
    </subcellularLocation>
</comment>
<comment type="similarity">
    <text evidence="2">Belongs to the bacillales FliT family.</text>
</comment>
<evidence type="ECO:0000250" key="1"/>
<evidence type="ECO:0000305" key="2"/>
<name>FLIT_BACVZ</name>
<feature type="chain" id="PRO_0000353905" description="Flagellar protein FliT">
    <location>
        <begin position="1"/>
        <end position="114"/>
    </location>
</feature>
<organism>
    <name type="scientific">Bacillus velezensis (strain DSM 23117 / BGSC 10A6 / LMG 26770 / FZB42)</name>
    <name type="common">Bacillus amyloliquefaciens subsp. plantarum</name>
    <dbReference type="NCBI Taxonomy" id="326423"/>
    <lineage>
        <taxon>Bacteria</taxon>
        <taxon>Bacillati</taxon>
        <taxon>Bacillota</taxon>
        <taxon>Bacilli</taxon>
        <taxon>Bacillales</taxon>
        <taxon>Bacillaceae</taxon>
        <taxon>Bacillus</taxon>
        <taxon>Bacillus amyloliquefaciens group</taxon>
    </lineage>
</organism>
<keyword id="KW-1005">Bacterial flagellum biogenesis</keyword>
<keyword id="KW-0143">Chaperone</keyword>
<keyword id="KW-0963">Cytoplasm</keyword>
<gene>
    <name type="primary">fliT</name>
    <name type="ordered locus">RBAM_032480</name>
</gene>
<accession>A7Z9A2</accession>
<sequence length="114" mass="13315">MNSNVFSLYNETKNMYAALKDAPESDDLISSVTAFTEKREEMLAGIKPPFSEEEKTLLQQVAAMDRLITGEVKRIQDGIRNEIKTLKKKRIYHNTYFNPYHQTTSDGRYYDKRK</sequence>
<protein>
    <recommendedName>
        <fullName>Flagellar protein FliT</fullName>
    </recommendedName>
</protein>
<reference key="1">
    <citation type="journal article" date="2007" name="Nat. Biotechnol.">
        <title>Comparative analysis of the complete genome sequence of the plant growth-promoting bacterium Bacillus amyloliquefaciens FZB42.</title>
        <authorList>
            <person name="Chen X.H."/>
            <person name="Koumoutsi A."/>
            <person name="Scholz R."/>
            <person name="Eisenreich A."/>
            <person name="Schneider K."/>
            <person name="Heinemeyer I."/>
            <person name="Morgenstern B."/>
            <person name="Voss B."/>
            <person name="Hess W.R."/>
            <person name="Reva O."/>
            <person name="Junge H."/>
            <person name="Voigt B."/>
            <person name="Jungblut P.R."/>
            <person name="Vater J."/>
            <person name="Suessmuth R."/>
            <person name="Liesegang H."/>
            <person name="Strittmatter A."/>
            <person name="Gottschalk G."/>
            <person name="Borriss R."/>
        </authorList>
    </citation>
    <scope>NUCLEOTIDE SEQUENCE [LARGE SCALE GENOMIC DNA]</scope>
    <source>
        <strain>DSM 23117 / BGSC 10A6 / LMG 26770 / FZB42</strain>
    </source>
</reference>
<proteinExistence type="inferred from homology"/>